<proteinExistence type="inferred from homology"/>
<name>Y1635_LIMF3</name>
<sequence>MLVTTTERIPGQEYEVLGECFGVTTQSRDIISNFGAGLKNLVGGEIKGYTKMLTTSRQEAIDRLKEEAAAMGADAVVMMRFDSGSIASDMQSVVAYGTAVKFIEKIRVRPLT</sequence>
<accession>B2GE89</accession>
<dbReference type="EMBL" id="AP008937">
    <property type="protein sequence ID" value="BAG27971.1"/>
    <property type="molecule type" value="Genomic_DNA"/>
</dbReference>
<dbReference type="RefSeq" id="WP_012391679.1">
    <property type="nucleotide sequence ID" value="NC_010610.1"/>
</dbReference>
<dbReference type="SMR" id="B2GE89"/>
<dbReference type="KEGG" id="lfe:LAF_1635"/>
<dbReference type="eggNOG" id="COG0393">
    <property type="taxonomic scope" value="Bacteria"/>
</dbReference>
<dbReference type="HOGENOM" id="CLU_117144_1_1_9"/>
<dbReference type="Proteomes" id="UP000001697">
    <property type="component" value="Chromosome"/>
</dbReference>
<dbReference type="Gene3D" id="3.30.110.70">
    <property type="entry name" value="Hypothetical protein apc22750. Chain B"/>
    <property type="match status" value="1"/>
</dbReference>
<dbReference type="HAMAP" id="MF_00338">
    <property type="entry name" value="UPF0145"/>
    <property type="match status" value="1"/>
</dbReference>
<dbReference type="InterPro" id="IPR035439">
    <property type="entry name" value="UPF0145_dom_sf"/>
</dbReference>
<dbReference type="InterPro" id="IPR002765">
    <property type="entry name" value="UPF0145_YbjQ-like"/>
</dbReference>
<dbReference type="PANTHER" id="PTHR34068:SF2">
    <property type="entry name" value="UPF0145 PROTEIN SCO3412"/>
    <property type="match status" value="1"/>
</dbReference>
<dbReference type="PANTHER" id="PTHR34068">
    <property type="entry name" value="UPF0145 PROTEIN YBJQ"/>
    <property type="match status" value="1"/>
</dbReference>
<dbReference type="Pfam" id="PF01906">
    <property type="entry name" value="YbjQ_1"/>
    <property type="match status" value="1"/>
</dbReference>
<dbReference type="SUPFAM" id="SSF117782">
    <property type="entry name" value="YbjQ-like"/>
    <property type="match status" value="1"/>
</dbReference>
<evidence type="ECO:0000255" key="1">
    <source>
        <dbReference type="HAMAP-Rule" id="MF_00338"/>
    </source>
</evidence>
<organism>
    <name type="scientific">Limosilactobacillus fermentum (strain NBRC 3956 / LMG 18251)</name>
    <name type="common">Lactobacillus fermentum</name>
    <dbReference type="NCBI Taxonomy" id="334390"/>
    <lineage>
        <taxon>Bacteria</taxon>
        <taxon>Bacillati</taxon>
        <taxon>Bacillota</taxon>
        <taxon>Bacilli</taxon>
        <taxon>Lactobacillales</taxon>
        <taxon>Lactobacillaceae</taxon>
        <taxon>Limosilactobacillus</taxon>
    </lineage>
</organism>
<gene>
    <name type="ordered locus">LAF_1635</name>
</gene>
<comment type="similarity">
    <text evidence="1">Belongs to the UPF0145 family.</text>
</comment>
<reference key="1">
    <citation type="journal article" date="2008" name="DNA Res.">
        <title>Comparative genome analysis of Lactobacillus reuteri and Lactobacillus fermentum reveal a genomic island for reuterin and cobalamin production.</title>
        <authorList>
            <person name="Morita H."/>
            <person name="Toh H."/>
            <person name="Fukuda S."/>
            <person name="Horikawa H."/>
            <person name="Oshima K."/>
            <person name="Suzuki T."/>
            <person name="Murakami M."/>
            <person name="Hisamatsu S."/>
            <person name="Kato Y."/>
            <person name="Takizawa T."/>
            <person name="Fukuoka H."/>
            <person name="Yoshimura T."/>
            <person name="Itoh K."/>
            <person name="O'Sullivan D.J."/>
            <person name="McKay L.L."/>
            <person name="Ohno H."/>
            <person name="Kikuchi J."/>
            <person name="Masaoka T."/>
            <person name="Hattori M."/>
        </authorList>
    </citation>
    <scope>NUCLEOTIDE SEQUENCE [LARGE SCALE GENOMIC DNA]</scope>
    <source>
        <strain>NBRC 3956 / LMG 18251</strain>
    </source>
</reference>
<keyword id="KW-1185">Reference proteome</keyword>
<feature type="chain" id="PRO_1000120004" description="UPF0145 protein LAF_1635">
    <location>
        <begin position="1"/>
        <end position="112"/>
    </location>
</feature>
<protein>
    <recommendedName>
        <fullName evidence="1">UPF0145 protein LAF_1635</fullName>
    </recommendedName>
</protein>